<reference key="1">
    <citation type="journal article" date="1999" name="Nature">
        <title>Genomic sequence comparison of two unrelated isolates of the human gastric pathogen Helicobacter pylori.</title>
        <authorList>
            <person name="Alm R.A."/>
            <person name="Ling L.-S.L."/>
            <person name="Moir D.T."/>
            <person name="King B.L."/>
            <person name="Brown E.D."/>
            <person name="Doig P.C."/>
            <person name="Smith D.R."/>
            <person name="Noonan B."/>
            <person name="Guild B.C."/>
            <person name="deJonge B.L."/>
            <person name="Carmel G."/>
            <person name="Tummino P.J."/>
            <person name="Caruso A."/>
            <person name="Uria-Nickelsen M."/>
            <person name="Mills D.M."/>
            <person name="Ives C."/>
            <person name="Gibson R."/>
            <person name="Merberg D."/>
            <person name="Mills S.D."/>
            <person name="Jiang Q."/>
            <person name="Taylor D.E."/>
            <person name="Vovis G.F."/>
            <person name="Trust T.J."/>
        </authorList>
    </citation>
    <scope>NUCLEOTIDE SEQUENCE [LARGE SCALE GENOMIC DNA]</scope>
    <source>
        <strain>J99 / ATCC 700824</strain>
    </source>
</reference>
<gene>
    <name evidence="1" type="primary">gyrA</name>
    <name type="ordered locus">jhp_0641</name>
</gene>
<feature type="chain" id="PRO_0000145237" description="DNA gyrase subunit A">
    <location>
        <begin position="1"/>
        <end position="828"/>
    </location>
</feature>
<feature type="domain" description="Topo IIA-type catalytic" evidence="2">
    <location>
        <begin position="38"/>
        <end position="501"/>
    </location>
</feature>
<feature type="short sequence motif" description="GyrA-box" evidence="1">
    <location>
        <begin position="528"/>
        <end position="534"/>
    </location>
</feature>
<feature type="active site" description="O-(5'-phospho-DNA)-tyrosine intermediate" evidence="1">
    <location>
        <position position="126"/>
    </location>
</feature>
<sequence>MQDHLVNETKNIVEVGIDSSIEESYLAYSMSVIIGRALPDARDGLKPVHRRILYAMHELGLTSKVAYKKSARIVGDVIGKYHPHGDTAVYDALVRMAQDFSMRLELVDGQGNFGSIDGDNAAAMRYTEARMTKASEEILRDIDKDTIDFVPNYDDTLKEPDILPSRLPNLLVNGANGIAVGMATSIPPHRIDEIIDALAHVLGNPNAELDKILEFVKGPDFPTGGIIYGKAGIVEAYKTGRGRVKVRAKVHVEKTKNKEIIVLGEMPFQTNKAKLVEQISDLAREKQIEGISEVRDESDREGIRVVIELKRDAMSEIVLNHLYKLTTMETTFSIILLAIYNKEPKIFTLLELLRLFLNHRKTIIIRRTIFELEKAKARAHILEGYLIALDNIDEIVRLIKTSPSPEAAKNALIERFSLSEIQSKAILEMRLQRLTGLERDKIKEEYQNLLELIDDLNGILKSEDRLNEVVKTELLEVKEQFSSPRRTEIQESYESIDTEDLIANEPMVVSMSYKGYVKRVDLKAYERQNRGGKGKLSGSTYEDDFIENFFVANTHDILLFITNKGQLYHLKVYKIPEASRIAMGKAIVNLISLAPNEKIMATLSTKDFSDERSLAFFTKNGVVKRTNLSEFGGNRSYSGIRAIVLDEGDELVGAKVVDKNAKHLLIASYLGMFIKFPLEDVREIGRTTRGVMGIRLNENDFVVGAVVISDDSNKLLSVSENGLGKQTLAEAYREQSRGGKGVIGMKLTQKTGNLVSVISVDDENLNLMILTASAKMIRVSIKDIRETGRNASGVKLINTADKVVYVNSCPKEEEPENLETSSVQNLFE</sequence>
<organism>
    <name type="scientific">Helicobacter pylori (strain J99 / ATCC 700824)</name>
    <name type="common">Campylobacter pylori J99</name>
    <dbReference type="NCBI Taxonomy" id="85963"/>
    <lineage>
        <taxon>Bacteria</taxon>
        <taxon>Pseudomonadati</taxon>
        <taxon>Campylobacterota</taxon>
        <taxon>Epsilonproteobacteria</taxon>
        <taxon>Campylobacterales</taxon>
        <taxon>Helicobacteraceae</taxon>
        <taxon>Helicobacter</taxon>
    </lineage>
</organism>
<proteinExistence type="inferred from homology"/>
<accession>Q9ZLD9</accession>
<keyword id="KW-0067">ATP-binding</keyword>
<keyword id="KW-0963">Cytoplasm</keyword>
<keyword id="KW-0238">DNA-binding</keyword>
<keyword id="KW-0413">Isomerase</keyword>
<keyword id="KW-0547">Nucleotide-binding</keyword>
<keyword id="KW-0799">Topoisomerase</keyword>
<dbReference type="EC" id="5.6.2.2" evidence="1"/>
<dbReference type="EMBL" id="AE001439">
    <property type="protein sequence ID" value="AAD06219.1"/>
    <property type="molecule type" value="Genomic_DNA"/>
</dbReference>
<dbReference type="PIR" id="E71906">
    <property type="entry name" value="E71906"/>
</dbReference>
<dbReference type="RefSeq" id="WP_001151036.1">
    <property type="nucleotide sequence ID" value="NC_000921.1"/>
</dbReference>
<dbReference type="SMR" id="Q9ZLD9"/>
<dbReference type="IntAct" id="Q9ZLD9">
    <property type="interactions" value="1"/>
</dbReference>
<dbReference type="KEGG" id="hpj:jhp_0641"/>
<dbReference type="eggNOG" id="COG0188">
    <property type="taxonomic scope" value="Bacteria"/>
</dbReference>
<dbReference type="Proteomes" id="UP000000804">
    <property type="component" value="Chromosome"/>
</dbReference>
<dbReference type="GO" id="GO:0005694">
    <property type="term" value="C:chromosome"/>
    <property type="evidence" value="ECO:0007669"/>
    <property type="project" value="InterPro"/>
</dbReference>
<dbReference type="GO" id="GO:0005737">
    <property type="term" value="C:cytoplasm"/>
    <property type="evidence" value="ECO:0007669"/>
    <property type="project" value="UniProtKB-SubCell"/>
</dbReference>
<dbReference type="GO" id="GO:0009330">
    <property type="term" value="C:DNA topoisomerase type II (double strand cut, ATP-hydrolyzing) complex"/>
    <property type="evidence" value="ECO:0007669"/>
    <property type="project" value="TreeGrafter"/>
</dbReference>
<dbReference type="GO" id="GO:0005524">
    <property type="term" value="F:ATP binding"/>
    <property type="evidence" value="ECO:0007669"/>
    <property type="project" value="UniProtKB-UniRule"/>
</dbReference>
<dbReference type="GO" id="GO:0003677">
    <property type="term" value="F:DNA binding"/>
    <property type="evidence" value="ECO:0007669"/>
    <property type="project" value="UniProtKB-UniRule"/>
</dbReference>
<dbReference type="GO" id="GO:0034335">
    <property type="term" value="F:DNA negative supercoiling activity"/>
    <property type="evidence" value="ECO:0007669"/>
    <property type="project" value="UniProtKB-ARBA"/>
</dbReference>
<dbReference type="GO" id="GO:0006265">
    <property type="term" value="P:DNA topological change"/>
    <property type="evidence" value="ECO:0007669"/>
    <property type="project" value="UniProtKB-UniRule"/>
</dbReference>
<dbReference type="GO" id="GO:0006261">
    <property type="term" value="P:DNA-templated DNA replication"/>
    <property type="evidence" value="ECO:0007669"/>
    <property type="project" value="UniProtKB-UniRule"/>
</dbReference>
<dbReference type="CDD" id="cd00187">
    <property type="entry name" value="TOP4c"/>
    <property type="match status" value="1"/>
</dbReference>
<dbReference type="FunFam" id="1.10.268.10:FF:000001">
    <property type="entry name" value="DNA gyrase subunit A"/>
    <property type="match status" value="1"/>
</dbReference>
<dbReference type="FunFam" id="3.30.1360.40:FF:000002">
    <property type="entry name" value="DNA gyrase subunit A"/>
    <property type="match status" value="1"/>
</dbReference>
<dbReference type="FunFam" id="3.90.199.10:FF:000001">
    <property type="entry name" value="DNA gyrase subunit A"/>
    <property type="match status" value="1"/>
</dbReference>
<dbReference type="FunFam" id="2.120.10.90:FF:000005">
    <property type="entry name" value="DNA topoisomerase 4 subunit A"/>
    <property type="match status" value="1"/>
</dbReference>
<dbReference type="Gene3D" id="3.30.1360.40">
    <property type="match status" value="1"/>
</dbReference>
<dbReference type="Gene3D" id="2.120.10.90">
    <property type="entry name" value="DNA gyrase/topoisomerase IV, subunit A, C-terminal"/>
    <property type="match status" value="1"/>
</dbReference>
<dbReference type="Gene3D" id="3.90.199.10">
    <property type="entry name" value="Topoisomerase II, domain 5"/>
    <property type="match status" value="1"/>
</dbReference>
<dbReference type="Gene3D" id="1.10.268.10">
    <property type="entry name" value="Topoisomerase, domain 3"/>
    <property type="match status" value="1"/>
</dbReference>
<dbReference type="HAMAP" id="MF_01897">
    <property type="entry name" value="GyrA"/>
    <property type="match status" value="1"/>
</dbReference>
<dbReference type="InterPro" id="IPR005743">
    <property type="entry name" value="GyrA"/>
</dbReference>
<dbReference type="InterPro" id="IPR006691">
    <property type="entry name" value="GyrA/parC_rep"/>
</dbReference>
<dbReference type="InterPro" id="IPR035516">
    <property type="entry name" value="Gyrase/topoIV_suA_C"/>
</dbReference>
<dbReference type="InterPro" id="IPR013760">
    <property type="entry name" value="Topo_IIA-like_dom_sf"/>
</dbReference>
<dbReference type="InterPro" id="IPR013758">
    <property type="entry name" value="Topo_IIA_A/C_ab"/>
</dbReference>
<dbReference type="InterPro" id="IPR013757">
    <property type="entry name" value="Topo_IIA_A_a_sf"/>
</dbReference>
<dbReference type="InterPro" id="IPR002205">
    <property type="entry name" value="Topo_IIA_dom_A"/>
</dbReference>
<dbReference type="InterPro" id="IPR050220">
    <property type="entry name" value="Type_II_DNA_Topoisomerases"/>
</dbReference>
<dbReference type="NCBIfam" id="TIGR01063">
    <property type="entry name" value="gyrA"/>
    <property type="match status" value="1"/>
</dbReference>
<dbReference type="NCBIfam" id="NF004043">
    <property type="entry name" value="PRK05560.1"/>
    <property type="match status" value="1"/>
</dbReference>
<dbReference type="NCBIfam" id="NF004044">
    <property type="entry name" value="PRK05561.1"/>
    <property type="match status" value="1"/>
</dbReference>
<dbReference type="PANTHER" id="PTHR43493:SF5">
    <property type="entry name" value="DNA GYRASE SUBUNIT A, CHLOROPLASTIC_MITOCHONDRIAL"/>
    <property type="match status" value="1"/>
</dbReference>
<dbReference type="PANTHER" id="PTHR43493">
    <property type="entry name" value="DNA GYRASE/TOPOISOMERASE SUBUNIT A"/>
    <property type="match status" value="1"/>
</dbReference>
<dbReference type="Pfam" id="PF03989">
    <property type="entry name" value="DNA_gyraseA_C"/>
    <property type="match status" value="6"/>
</dbReference>
<dbReference type="Pfam" id="PF00521">
    <property type="entry name" value="DNA_topoisoIV"/>
    <property type="match status" value="1"/>
</dbReference>
<dbReference type="SMART" id="SM00434">
    <property type="entry name" value="TOP4c"/>
    <property type="match status" value="1"/>
</dbReference>
<dbReference type="SUPFAM" id="SSF101904">
    <property type="entry name" value="GyrA/ParC C-terminal domain-like"/>
    <property type="match status" value="1"/>
</dbReference>
<dbReference type="SUPFAM" id="SSF56719">
    <property type="entry name" value="Type II DNA topoisomerase"/>
    <property type="match status" value="1"/>
</dbReference>
<dbReference type="PROSITE" id="PS52040">
    <property type="entry name" value="TOPO_IIA"/>
    <property type="match status" value="1"/>
</dbReference>
<evidence type="ECO:0000255" key="1">
    <source>
        <dbReference type="HAMAP-Rule" id="MF_01897"/>
    </source>
</evidence>
<evidence type="ECO:0000255" key="2">
    <source>
        <dbReference type="PROSITE-ProRule" id="PRU01384"/>
    </source>
</evidence>
<protein>
    <recommendedName>
        <fullName evidence="1">DNA gyrase subunit A</fullName>
        <ecNumber evidence="1">5.6.2.2</ecNumber>
    </recommendedName>
</protein>
<name>GYRA_HELPJ</name>
<comment type="function">
    <text evidence="1">A type II topoisomerase that negatively supercoils closed circular double-stranded (ds) DNA in an ATP-dependent manner to modulate DNA topology and maintain chromosomes in an underwound state. Negative supercoiling favors strand separation, and DNA replication, transcription, recombination and repair, all of which involve strand separation. Also able to catalyze the interconversion of other topological isomers of dsDNA rings, including catenanes and knotted rings. Type II topoisomerases break and join 2 DNA strands simultaneously in an ATP-dependent manner.</text>
</comment>
<comment type="catalytic activity">
    <reaction evidence="1">
        <text>ATP-dependent breakage, passage and rejoining of double-stranded DNA.</text>
        <dbReference type="EC" id="5.6.2.2"/>
    </reaction>
</comment>
<comment type="subunit">
    <text evidence="1">Heterotetramer, composed of two GyrA and two GyrB chains. In the heterotetramer, GyrA contains the active site tyrosine that forms a transient covalent intermediate with DNA, while GyrB binds cofactors and catalyzes ATP hydrolysis.</text>
</comment>
<comment type="subcellular location">
    <subcellularLocation>
        <location evidence="1">Cytoplasm</location>
    </subcellularLocation>
</comment>
<comment type="miscellaneous">
    <text evidence="1">Few gyrases are as efficient as E.coli at forming negative supercoils. Not all organisms have 2 type II topoisomerases; in organisms with a single type II topoisomerase this enzyme also has to decatenate newly replicated chromosomes.</text>
</comment>
<comment type="similarity">
    <text evidence="1">Belongs to the type II topoisomerase GyrA/ParC subunit family.</text>
</comment>